<gene>
    <name evidence="1" type="primary">rgy1</name>
    <name evidence="15" type="synonym">top-rg</name>
    <name evidence="13" type="synonym">topR1</name>
    <name type="ordered locus">Saci_0839</name>
</gene>
<accession>Q08582</accession>
<accession>Q4JAH3</accession>
<reference key="1">
    <citation type="journal article" date="1993" name="Proc. Natl. Acad. Sci. U.S.A.">
        <title>Reverse gyrase: a helicase-like domain and a type I topoisomerase in the same polypeptide.</title>
        <authorList>
            <person name="Confalonieri F."/>
            <person name="Elie C."/>
            <person name="Nadal M."/>
            <person name="de la Tour C.B."/>
            <person name="Forterre P."/>
            <person name="Duguet M."/>
        </authorList>
    </citation>
    <scope>NUCLEOTIDE SEQUENCE [GENOMIC DNA]</scope>
    <scope>PROTEIN SEQUENCE OF 141-149; 167-180; 254-261; 427-432; 612-622; 881-887; 1036-1043; 1080-1086 AND 1239-1247</scope>
    <scope>DOMAIN</scope>
    <source>
        <strain>ATCC 33909 / DSM 639 / JCM 8929 / NBRC 15157 / NCIMB 11770</strain>
    </source>
</reference>
<reference key="2">
    <citation type="journal article" date="1994" name="Proc. Natl. Acad. Sci. U.S.A.">
        <authorList>
            <person name="Confalonieri F."/>
            <person name="Elie C."/>
            <person name="Nadal M."/>
            <person name="de la Tour C.B."/>
            <person name="Forterre P."/>
            <person name="Duguet M."/>
        </authorList>
    </citation>
    <scope>ERRATUM OF PUBMED:8389456</scope>
</reference>
<reference key="3">
    <citation type="journal article" date="2005" name="J. Bacteriol.">
        <title>The genome of Sulfolobus acidocaldarius, a model organism of the Crenarchaeota.</title>
        <authorList>
            <person name="Chen L."/>
            <person name="Bruegger K."/>
            <person name="Skovgaard M."/>
            <person name="Redder P."/>
            <person name="She Q."/>
            <person name="Torarinsson E."/>
            <person name="Greve B."/>
            <person name="Awayez M."/>
            <person name="Zibat A."/>
            <person name="Klenk H.-P."/>
            <person name="Garrett R.A."/>
        </authorList>
    </citation>
    <scope>NUCLEOTIDE SEQUENCE [LARGE SCALE GENOMIC DNA]</scope>
    <source>
        <strain>ATCC 33909 / DSM 639 / JCM 8929 / NBRC 15157 / NCIMB 11770</strain>
    </source>
</reference>
<reference key="4">
    <citation type="journal article" date="1984" name="Nature">
        <title>Reverse gyrase--a topoisomerase which introduces positive superhelical turns into DNA.</title>
        <authorList>
            <person name="Kikuchi A."/>
            <person name="Asai K."/>
        </authorList>
    </citation>
    <scope>FUNCTION</scope>
    <scope>COFACTOR</scope>
    <source>
        <strain>FERM P-7137</strain>
    </source>
</reference>
<reference key="5">
    <citation type="journal article" date="1985" name="EMBO J.">
        <title>High positive supercoiling in vitro catalyzed by an ATP and polyethylene glycol-stimulated topoisomerase from Sulfolobus acidocaldarius.</title>
        <authorList>
            <person name="Forterre P."/>
            <person name="Mirambeau G."/>
            <person name="Jaxel C."/>
            <person name="Nadal M."/>
            <person name="Duguet M."/>
        </authorList>
    </citation>
    <scope>FUNCTION</scope>
    <scope>CATALYTIC ACTIVITY</scope>
    <scope>COFACTOR</scope>
    <scope>BIOPHYSICOCHEMICAL PROPERTIES</scope>
    <source>
        <strain>ATCC 33909 / DSM 639 / JCM 8929 / NBRC 15157 / NCIMB 11770</strain>
    </source>
</reference>
<reference key="6">
    <citation type="journal article" date="1987" name="J. Biol. Chem.">
        <title>Intrinsic DNA-dependent ATPase activity of reverse gyrase.</title>
        <authorList>
            <person name="Shibata T."/>
            <person name="Nakasu S."/>
            <person name="Yasui K."/>
            <person name="Kikuchi A."/>
        </authorList>
    </citation>
    <scope>FUNCTION AS A REVERSE GYRASE</scope>
    <scope>FUNCTION AS A TOPOISOMERASE</scope>
    <scope>ATPASE ACTIVITY</scope>
    <scope>DNA AFFINITY</scope>
    <source>
        <strain>FERM P-7137</strain>
    </source>
</reference>
<reference key="7">
    <citation type="journal article" date="1988" name="Biochemistry">
        <title>Reverse gyrase of Sulfolobus: purification to homogeneity and characterization.</title>
        <authorList>
            <person name="Nadal M."/>
            <person name="Jaxel C."/>
            <person name="Portemer C."/>
            <person name="Forterre P."/>
            <person name="Mirambeau G."/>
            <person name="Duguet M."/>
        </authorList>
    </citation>
    <scope>FUNCTION</scope>
    <scope>SUBUNIT</scope>
    <source>
        <strain>ATCC 33909 / DSM 639 / JCM 8929 / NBRC 15157 / NCIMB 11770</strain>
    </source>
</reference>
<reference key="8">
    <citation type="journal article" date="1989" name="EMBO J.">
        <title>Reverse gyrase binding to DNA alters the double helix structure and produces single-strand cleavage in the absence of ATP.</title>
        <authorList>
            <person name="Jaxel C."/>
            <person name="Nadal M."/>
            <person name="Mirambeau G."/>
            <person name="Forterre P."/>
            <person name="Takahashi M."/>
            <person name="Duguet M."/>
        </authorList>
    </citation>
    <scope>FUNCTION</scope>
    <scope>CATALYTIC ACTIVITY</scope>
    <scope>BIOPHYSICOCHEMICAL PROPERTIES</scope>
    <scope>DNA-BINDING</scope>
</reference>
<reference key="9">
    <citation type="journal article" date="2000" name="J. Biol. Chem.">
        <title>Reverse gyrase, the two domains intimately cooperate to promote positive supercoiling.</title>
        <authorList>
            <person name="Declais A.C."/>
            <person name="Marsault J."/>
            <person name="Confalonieri F."/>
            <person name="de La Tour C.B."/>
            <person name="Duguet M."/>
        </authorList>
    </citation>
    <scope>FUNCTION</scope>
    <scope>CATALYTIC ACTIVITY</scope>
    <scope>ACTIVE SITE</scope>
    <scope>DOMAIN</scope>
    <scope>MUTAGENESIS OF TYR-965</scope>
</reference>
<reference key="10">
    <citation type="journal article" date="2007" name="Proc. Natl. Acad. Sci. U.S.A.">
        <title>Genome-wide transcription map of an archaeal cell cycle.</title>
        <authorList>
            <person name="Lundgren M."/>
            <person name="Bernander R."/>
        </authorList>
    </citation>
    <scope>INDUCTION</scope>
    <source>
        <strain>ATCC 33909 / DSM 639 / JCM 8929 / NBRC 15157 / NCIMB 11770</strain>
    </source>
</reference>
<organism>
    <name type="scientific">Sulfolobus acidocaldarius (strain ATCC 33909 / DSM 639 / JCM 8929 / NBRC 15157 / NCIMB 11770)</name>
    <dbReference type="NCBI Taxonomy" id="330779"/>
    <lineage>
        <taxon>Archaea</taxon>
        <taxon>Thermoproteota</taxon>
        <taxon>Thermoprotei</taxon>
        <taxon>Sulfolobales</taxon>
        <taxon>Sulfolobaceae</taxon>
        <taxon>Sulfolobus</taxon>
    </lineage>
</organism>
<protein>
    <recommendedName>
        <fullName evidence="1 14">Reverse gyrase 1</fullName>
        <ecNumber evidence="1 5 6 9 10 11">5.6.2.-</ecNumber>
    </recommendedName>
</protein>
<keyword id="KW-0067">ATP-binding</keyword>
<keyword id="KW-0963">Cytoplasm</keyword>
<keyword id="KW-0903">Direct protein sequencing</keyword>
<keyword id="KW-0238">DNA-binding</keyword>
<keyword id="KW-0413">Isomerase</keyword>
<keyword id="KW-0460">Magnesium</keyword>
<keyword id="KW-0479">Metal-binding</keyword>
<keyword id="KW-0547">Nucleotide-binding</keyword>
<keyword id="KW-1185">Reference proteome</keyword>
<keyword id="KW-0799">Topoisomerase</keyword>
<keyword id="KW-0862">Zinc</keyword>
<keyword id="KW-0863">Zinc-finger</keyword>
<comment type="function">
    <text evidence="5 6 8 9 10 11 18">Modifies the topological state of DNA by introducing positive supercoils in an ATP-dependent process (PubMed:10748189, PubMed:14708549, PubMed:2853975, PubMed:3038879, PubMed:6328327). Increases the linking number in steps of +1 (PubMed:14708549). Has a DNA-stimulated ATPase activity; closed circular ssDNA stimulates ATPase much better than dsDNA although negative supercoiled, positive supercoiled and relaxed dsDNA all stimulate ATPase activity (PubMed:3038879). All NTPs permit topoisomerization (relaxation) of negatively supercoiled dsDNA without nucleotide hydrolysis (PubMed:3038879). It transiently cleaves a single DNA strand and remains covalently bound to the 5' DNA end (PubMed:2555155). Acts via a tyrosine residue (PubMed:10748189). Reverse gyrase binds and unwinds DNA independently of ATP binding and DNA cleavage (PubMed:10748189). May be involved in rewinding the DNA strands in the regions of the chromosome that have opened up to allow transcription or replication, probably acts via ssDNA regions of the chromosome (Probable).</text>
</comment>
<comment type="catalytic activity">
    <reaction evidence="1 10">
        <text>ATP + H2O = ADP + phosphate + H(+)</text>
        <dbReference type="Rhea" id="RHEA:13065"/>
        <dbReference type="ChEBI" id="CHEBI:15377"/>
        <dbReference type="ChEBI" id="CHEBI:15378"/>
        <dbReference type="ChEBI" id="CHEBI:30616"/>
        <dbReference type="ChEBI" id="CHEBI:43474"/>
        <dbReference type="ChEBI" id="CHEBI:456216"/>
    </reaction>
</comment>
<comment type="cofactor">
    <cofactor evidence="1">
        <name>Zn(2+)</name>
        <dbReference type="ChEBI" id="CHEBI:29105"/>
    </cofactor>
    <text evidence="1">Binds 1 zinc ion per subunit.</text>
</comment>
<comment type="cofactor">
    <cofactor evidence="1 6 11">
        <name>Mg(2+)</name>
        <dbReference type="ChEBI" id="CHEBI:18420"/>
    </cofactor>
</comment>
<comment type="biophysicochemical properties">
    <temperatureDependence>
        <text evidence="6 8">Optimum temperature is 75 degrees Celsius, poor activity below 50 degrees Celsius (PubMed:14708549, PubMed:2555155).</text>
    </temperatureDependence>
</comment>
<comment type="subunit">
    <text evidence="1 9">Monomer (PubMed:2853975).</text>
</comment>
<comment type="subcellular location">
    <subcellularLocation>
        <location evidence="1">Cytoplasm</location>
    </subcellularLocation>
</comment>
<comment type="induction">
    <text evidence="7">Constitutively transcribed during cell cycle (PubMed:17307872).</text>
</comment>
<comment type="domain">
    <text evidence="1 5">Introduction of positive supercoils requires the cooperation of both domains (PubMed:10748189). The 2 domains can be expressed separately and will reconstitute the reverse gyrase activity, neither domain has the expected activity individually (PubMed:10748189). The cooperative action between the helicase-like and the topoisomerase domains is specific; other helicases or topoisomerases cannot substitute (PubMed:10748189). The helicase-like domain probably does not directly unwind DNA but acts more likely by driving ATP-dependent conformational changes within the whole enzyme, functioning more like a protein motor (PubMed:10748189). A beta hairpin in the 'latch' region of the N-terminal domain plays a regulatory role in the enzyme, repressing topoisomerase activity in the absence of ATP and therefore preventing the enzyme from acting as an ATP-independent relaxing enzyme; it also helps to coordinate nucleotide hydrolysis by the ATPase domain with the supercoiling activity of the topoisomerase domain.</text>
</comment>
<comment type="PTM">
    <text evidence="12">The N-terminus is blocked (PubMed:8389456).</text>
</comment>
<comment type="miscellaneous">
    <text evidence="1">This enzyme is the only unique feature of hyperthermophilic bacteria/archaea known and seems to be essential for adaptation to life at high temperatures. It may play a role in stabilization of DNA at high temperatures.</text>
</comment>
<comment type="similarity">
    <text evidence="1 19">In the N-terminal section; belongs to the DEAD box helicase family. DDVD subfamily.</text>
</comment>
<comment type="similarity">
    <text evidence="1">In the C-terminal section; belongs to the type IA topoisomerase family.</text>
</comment>
<comment type="sequence caution" evidence="16">
    <conflict type="frameshift">
        <sequence resource="EMBL-CDS" id="AAY80206"/>
    </conflict>
</comment>
<proteinExistence type="evidence at protein level"/>
<name>RGYR1_SULAC</name>
<sequence>MQSLSDIPPSIYLFSCPNCGRSISTYRLLLGSVCNICLEEDKEYKNIGDLIKDIEKQGNLIKLKDIQRVLDDYESFVSVFRRLLGFPPFGPQKSWIYRLLSGESFAIIAPPGLGKTTFGLISSIYLYLRGKKSILVFPTKSLVRQAIDKLSSYIQNLAEIKENPPKVIYYYSGMSASERKEADEGLQSKTFDIFISTNRFLIDNIDQISSTSYQFLFVDDVDTALKSSKSAQAILKLLGFTPSDQDKIKESLKKYRENTQKNEQNEYIFEEIDKIRKDRLASKTVIFSSATLNRSNPILTSLVGFKPGSSVIYIRKVYDMYVKQPDKEQETFNLIKSLLHRLGDGGLIFVPVDKKQEYIKRLQSELSNEFNVAAITSTSATKIDDFANGEIDVLIGSATHYGILVRGLDLPWRVKYSIFVGIPKFKFRLGEKVNLLTLSRLLSLIALITKDQEVIYISRRVKDKIRRLSPAALTMLSVQAKEGKLEDSILLKAYDLLNKYLSNQNVLKRISEIGDFVLSPDNDILIPDYLTYVQASGRTSRIYAGDVTTGLSILLVDDFNLFRLLNKKLQYILDDIQWRELDVEKWTAGDVEIKNLISKINEERNEISKLKNEGNVAPALQKVKTVLLVVESPNKAKTISSFFSRPSIRQIGNMRVYETVLGDKVLMVTASGGHVYDLTTQDMGIYGVDIMKQNSSLVFIPIYNSIKKCENNHQFTDFFESNKCPRCMTTKVRYDSLKSINVLRNLAVEADEVLIGTDPDTEGEKIAWDLYLALRPYNSNIRRAEFHEVTRKAILQAINQPREFNVNLVKSQLVRRIEDRWIGFKLSSILQTRFWPEYCKSLSSNKQLNCNENKNLSAGRVQTPVLSWIVDRYTEYQRNKSRVYYGKIDQLQDIVIYVPKQDGVRKNSKIVVVFNEINQLEEEFGPLPPYTTDTLLSDSNNFFGLSAPETMRIAQDLFELGLITYHRTDSNRISNTGISVAENYLKDVLGDKYTNIFKPRSWGDGGAHEGIRPTKPIDVEQLRLLIEEGELELAKRLTNNHFKVYDIIFRRFISSQIIPLKVRKEIVKIELYGENKKEKINSNQNIIEVITGITLPGIDTEISKFAYVPVRNVSRSVAERLKELGRSIPTDFSIEISNSFIKSTVNLYTQADLVMEMKNKKIGRPSTYATIIGTILRRGYVLESLKTKKLIPTRLGVEVNKYLNENYGRFVSEDRTRKLLQLMDMVEAGQEKYEEVLKQVYEEINEIR</sequence>
<feature type="initiator methionine" description="Removed">
    <location>
        <position position="1"/>
    </location>
</feature>
<feature type="chain" id="PRO_0000158090" description="Reverse gyrase 1">
    <location>
        <begin position="2"/>
        <end position="1248"/>
    </location>
</feature>
<feature type="domain" description="Helicase ATP-binding" evidence="1">
    <location>
        <begin position="96"/>
        <end position="262"/>
    </location>
</feature>
<feature type="domain" description="Toprim" evidence="1">
    <location>
        <begin position="625"/>
        <end position="789"/>
    </location>
</feature>
<feature type="domain" description="Topo IA-type catalytic" evidence="4">
    <location>
        <begin position="805"/>
        <end position="1248"/>
    </location>
</feature>
<feature type="zinc finger region" description="RG N-terminal-type" evidence="2">
    <location>
        <begin position="7"/>
        <end position="44"/>
    </location>
</feature>
<feature type="zinc finger region" description="RG C-terminal-type; atypical" evidence="3">
    <location>
        <begin position="706"/>
        <end position="735"/>
    </location>
</feature>
<feature type="region of interest" description="Topoisomerase I" evidence="1">
    <location>
        <begin position="621"/>
        <end position="1248"/>
    </location>
</feature>
<feature type="short sequence motif" description="DEAD box" evidence="1">
    <location>
        <begin position="219"/>
        <end position="222"/>
    </location>
</feature>
<feature type="active site" description="O-(5'-phospho-DNA)-tyrosine intermediate" evidence="4 17">
    <location>
        <position position="965"/>
    </location>
</feature>
<feature type="binding site" evidence="1">
    <location>
        <position position="16"/>
    </location>
    <ligand>
        <name>Zn(2+)</name>
        <dbReference type="ChEBI" id="CHEBI:29105"/>
        <label>1</label>
    </ligand>
</feature>
<feature type="binding site" evidence="1">
    <location>
        <position position="19"/>
    </location>
    <ligand>
        <name>Zn(2+)</name>
        <dbReference type="ChEBI" id="CHEBI:29105"/>
        <label>1</label>
    </ligand>
</feature>
<feature type="binding site" evidence="1">
    <location>
        <position position="34"/>
    </location>
    <ligand>
        <name>Zn(2+)</name>
        <dbReference type="ChEBI" id="CHEBI:29105"/>
        <label>1</label>
    </ligand>
</feature>
<feature type="binding site" evidence="1">
    <location>
        <position position="37"/>
    </location>
    <ligand>
        <name>Zn(2+)</name>
        <dbReference type="ChEBI" id="CHEBI:29105"/>
        <label>1</label>
    </ligand>
</feature>
<feature type="binding site" evidence="1">
    <location>
        <position position="92"/>
    </location>
    <ligand>
        <name>ATP</name>
        <dbReference type="ChEBI" id="CHEBI:30616"/>
    </ligand>
</feature>
<feature type="binding site" evidence="1">
    <location>
        <begin position="109"/>
        <end position="116"/>
    </location>
    <ligand>
        <name>ATP</name>
        <dbReference type="ChEBI" id="CHEBI:30616"/>
    </ligand>
</feature>
<feature type="binding site" evidence="1">
    <location>
        <position position="631"/>
    </location>
    <ligand>
        <name>Mg(2+)</name>
        <dbReference type="ChEBI" id="CHEBI:18420"/>
        <note>catalytic</note>
    </ligand>
</feature>
<feature type="binding site" evidence="3">
    <location>
        <position position="709"/>
    </location>
    <ligand>
        <name>Zn(2+)</name>
        <dbReference type="ChEBI" id="CHEBI:29105"/>
        <label>2</label>
    </ligand>
</feature>
<feature type="binding site" evidence="3">
    <location>
        <position position="713"/>
    </location>
    <ligand>
        <name>Zn(2+)</name>
        <dbReference type="ChEBI" id="CHEBI:29105"/>
        <label>2</label>
    </ligand>
</feature>
<feature type="binding site" evidence="3">
    <location>
        <position position="724"/>
    </location>
    <ligand>
        <name>Zn(2+)</name>
        <dbReference type="ChEBI" id="CHEBI:29105"/>
        <label>2</label>
    </ligand>
</feature>
<feature type="binding site" evidence="3">
    <location>
        <position position="727"/>
    </location>
    <ligand>
        <name>Zn(2+)</name>
        <dbReference type="ChEBI" id="CHEBI:29105"/>
        <label>2</label>
    </ligand>
</feature>
<feature type="binding site" evidence="1">
    <location>
        <position position="758"/>
    </location>
    <ligand>
        <name>Mg(2+)</name>
        <dbReference type="ChEBI" id="CHEBI:18420"/>
        <note>catalytic</note>
    </ligand>
</feature>
<feature type="mutagenesis site" description="Loss of topoisomerase activity, still unwinds DNA in the absence of ATP." evidence="5">
    <original>Y</original>
    <variation>F</variation>
    <location>
        <position position="965"/>
    </location>
</feature>
<evidence type="ECO:0000255" key="1">
    <source>
        <dbReference type="HAMAP-Rule" id="MF_01125"/>
    </source>
</evidence>
<evidence type="ECO:0000255" key="2">
    <source>
        <dbReference type="PROSITE-ProRule" id="PRU01380"/>
    </source>
</evidence>
<evidence type="ECO:0000255" key="3">
    <source>
        <dbReference type="PROSITE-ProRule" id="PRU01381"/>
    </source>
</evidence>
<evidence type="ECO:0000255" key="4">
    <source>
        <dbReference type="PROSITE-ProRule" id="PRU01383"/>
    </source>
</evidence>
<evidence type="ECO:0000269" key="5">
    <source>
    </source>
</evidence>
<evidence type="ECO:0000269" key="6">
    <source>
    </source>
</evidence>
<evidence type="ECO:0000269" key="7">
    <source>
    </source>
</evidence>
<evidence type="ECO:0000269" key="8">
    <source>
    </source>
</evidence>
<evidence type="ECO:0000269" key="9">
    <source>
    </source>
</evidence>
<evidence type="ECO:0000269" key="10">
    <source>
    </source>
</evidence>
<evidence type="ECO:0000269" key="11">
    <source>
    </source>
</evidence>
<evidence type="ECO:0000269" key="12">
    <source>
    </source>
</evidence>
<evidence type="ECO:0000303" key="13">
    <source>
    </source>
</evidence>
<evidence type="ECO:0000303" key="14">
    <source>
    </source>
</evidence>
<evidence type="ECO:0000303" key="15">
    <source>
    </source>
</evidence>
<evidence type="ECO:0000305" key="16"/>
<evidence type="ECO:0000305" key="17">
    <source>
    </source>
</evidence>
<evidence type="ECO:0000305" key="18">
    <source>
    </source>
</evidence>
<evidence type="ECO:0000305" key="19">
    <source>
    </source>
</evidence>
<dbReference type="EC" id="5.6.2.-" evidence="1 5 6 9 10 11"/>
<dbReference type="EMBL" id="L10651">
    <property type="protein sequence ID" value="AAA72346.1"/>
    <property type="molecule type" value="Genomic_DNA"/>
</dbReference>
<dbReference type="EMBL" id="CP000077">
    <property type="protein sequence ID" value="AAY80206.1"/>
    <property type="status" value="ALT_FRAME"/>
    <property type="molecule type" value="Genomic_DNA"/>
</dbReference>
<dbReference type="PIR" id="A47445">
    <property type="entry name" value="A47445"/>
</dbReference>
<dbReference type="RefSeq" id="WP_176586667.1">
    <property type="nucleotide sequence ID" value="NZ_CP046615.1"/>
</dbReference>
<dbReference type="SMR" id="Q08582"/>
<dbReference type="STRING" id="330779.Saci_0839"/>
<dbReference type="GeneID" id="14551352"/>
<dbReference type="KEGG" id="sai:Saci_0839"/>
<dbReference type="PATRIC" id="fig|330779.12.peg.804"/>
<dbReference type="eggNOG" id="arCOG01526">
    <property type="taxonomic scope" value="Archaea"/>
</dbReference>
<dbReference type="HOGENOM" id="CLU_002886_0_0_2"/>
<dbReference type="BRENDA" id="5.6.2.2">
    <property type="organism ID" value="6160"/>
</dbReference>
<dbReference type="Proteomes" id="UP000001018">
    <property type="component" value="Chromosome"/>
</dbReference>
<dbReference type="GO" id="GO:0005737">
    <property type="term" value="C:cytoplasm"/>
    <property type="evidence" value="ECO:0007669"/>
    <property type="project" value="UniProtKB-SubCell"/>
</dbReference>
<dbReference type="GO" id="GO:0005524">
    <property type="term" value="F:ATP binding"/>
    <property type="evidence" value="ECO:0007669"/>
    <property type="project" value="UniProtKB-UniRule"/>
</dbReference>
<dbReference type="GO" id="GO:0016887">
    <property type="term" value="F:ATP hydrolysis activity"/>
    <property type="evidence" value="ECO:0007669"/>
    <property type="project" value="InterPro"/>
</dbReference>
<dbReference type="GO" id="GO:0003677">
    <property type="term" value="F:DNA binding"/>
    <property type="evidence" value="ECO:0007669"/>
    <property type="project" value="UniProtKB-UniRule"/>
</dbReference>
<dbReference type="GO" id="GO:0003918">
    <property type="term" value="F:DNA topoisomerase type II (double strand cut, ATP-hydrolyzing) activity"/>
    <property type="evidence" value="ECO:0007669"/>
    <property type="project" value="UniProtKB-EC"/>
</dbReference>
<dbReference type="GO" id="GO:0160097">
    <property type="term" value="F:reverse gyrase activity"/>
    <property type="evidence" value="ECO:0000314"/>
    <property type="project" value="UniProtKB"/>
</dbReference>
<dbReference type="GO" id="GO:0008270">
    <property type="term" value="F:zinc ion binding"/>
    <property type="evidence" value="ECO:0007669"/>
    <property type="project" value="UniProtKB-UniRule"/>
</dbReference>
<dbReference type="GO" id="GO:0006265">
    <property type="term" value="P:DNA topological change"/>
    <property type="evidence" value="ECO:0000314"/>
    <property type="project" value="UniProtKB"/>
</dbReference>
<dbReference type="CDD" id="cd17924">
    <property type="entry name" value="DDXDc_reverse_gyrase"/>
    <property type="match status" value="1"/>
</dbReference>
<dbReference type="CDD" id="cd18798">
    <property type="entry name" value="SF2_C_reverse_gyrase"/>
    <property type="match status" value="1"/>
</dbReference>
<dbReference type="CDD" id="cd00186">
    <property type="entry name" value="TOP1Ac"/>
    <property type="match status" value="1"/>
</dbReference>
<dbReference type="CDD" id="cd03361">
    <property type="entry name" value="TOPRIM_TopoIA_RevGyr"/>
    <property type="match status" value="1"/>
</dbReference>
<dbReference type="Gene3D" id="2.60.510.20">
    <property type="match status" value="1"/>
</dbReference>
<dbReference type="Gene3D" id="3.40.50.140">
    <property type="match status" value="1"/>
</dbReference>
<dbReference type="Gene3D" id="3.40.50.300">
    <property type="entry name" value="P-loop containing nucleotide triphosphate hydrolases"/>
    <property type="match status" value="3"/>
</dbReference>
<dbReference type="Gene3D" id="1.10.460.10">
    <property type="entry name" value="Topoisomerase I, domain 2"/>
    <property type="match status" value="1"/>
</dbReference>
<dbReference type="Gene3D" id="1.10.290.10">
    <property type="entry name" value="Topoisomerase I, domain 4"/>
    <property type="match status" value="1"/>
</dbReference>
<dbReference type="HAMAP" id="MF_01125">
    <property type="entry name" value="Reverse_gyrase"/>
    <property type="match status" value="1"/>
</dbReference>
<dbReference type="InterPro" id="IPR003593">
    <property type="entry name" value="AAA+_ATPase"/>
</dbReference>
<dbReference type="InterPro" id="IPR011545">
    <property type="entry name" value="DEAD/DEAH_box_helicase_dom"/>
</dbReference>
<dbReference type="InterPro" id="IPR014001">
    <property type="entry name" value="Helicase_ATP-bd"/>
</dbReference>
<dbReference type="InterPro" id="IPR027417">
    <property type="entry name" value="P-loop_NTPase"/>
</dbReference>
<dbReference type="InterPro" id="IPR005736">
    <property type="entry name" value="Reverse_gyrase"/>
</dbReference>
<dbReference type="InterPro" id="IPR003601">
    <property type="entry name" value="Topo_IA_2"/>
</dbReference>
<dbReference type="InterPro" id="IPR013497">
    <property type="entry name" value="Topo_IA_cen"/>
</dbReference>
<dbReference type="InterPro" id="IPR013824">
    <property type="entry name" value="Topo_IA_cen_sub1"/>
</dbReference>
<dbReference type="InterPro" id="IPR013826">
    <property type="entry name" value="Topo_IA_cen_sub3"/>
</dbReference>
<dbReference type="InterPro" id="IPR023405">
    <property type="entry name" value="Topo_IA_core_domain"/>
</dbReference>
<dbReference type="InterPro" id="IPR003602">
    <property type="entry name" value="Topo_IA_DNA-bd_dom"/>
</dbReference>
<dbReference type="InterPro" id="IPR006171">
    <property type="entry name" value="TOPRIM_dom"/>
</dbReference>
<dbReference type="InterPro" id="IPR034142">
    <property type="entry name" value="TOPRIM_RevGyr"/>
</dbReference>
<dbReference type="InterPro" id="IPR040569">
    <property type="entry name" value="Znf_Rg"/>
</dbReference>
<dbReference type="NCBIfam" id="TIGR01054">
    <property type="entry name" value="rgy"/>
    <property type="match status" value="1"/>
</dbReference>
<dbReference type="PANTHER" id="PTHR43505">
    <property type="entry name" value="REVERSE GYRASE"/>
    <property type="match status" value="1"/>
</dbReference>
<dbReference type="PANTHER" id="PTHR43505:SF1">
    <property type="entry name" value="REVERSE GYRASE"/>
    <property type="match status" value="1"/>
</dbReference>
<dbReference type="Pfam" id="PF00270">
    <property type="entry name" value="DEAD"/>
    <property type="match status" value="1"/>
</dbReference>
<dbReference type="Pfam" id="PF01131">
    <property type="entry name" value="Topoisom_bac"/>
    <property type="match status" value="1"/>
</dbReference>
<dbReference type="Pfam" id="PF01751">
    <property type="entry name" value="Toprim"/>
    <property type="match status" value="1"/>
</dbReference>
<dbReference type="Pfam" id="PF17915">
    <property type="entry name" value="zf_Rg"/>
    <property type="match status" value="1"/>
</dbReference>
<dbReference type="PRINTS" id="PR00417">
    <property type="entry name" value="PRTPISMRASEI"/>
</dbReference>
<dbReference type="SMART" id="SM00382">
    <property type="entry name" value="AAA"/>
    <property type="match status" value="1"/>
</dbReference>
<dbReference type="SMART" id="SM00487">
    <property type="entry name" value="DEXDc"/>
    <property type="match status" value="1"/>
</dbReference>
<dbReference type="SMART" id="SM00437">
    <property type="entry name" value="TOP1Ac"/>
    <property type="match status" value="1"/>
</dbReference>
<dbReference type="SMART" id="SM00436">
    <property type="entry name" value="TOP1Bc"/>
    <property type="match status" value="1"/>
</dbReference>
<dbReference type="SMART" id="SM00493">
    <property type="entry name" value="TOPRIM"/>
    <property type="match status" value="1"/>
</dbReference>
<dbReference type="SUPFAM" id="SSF52540">
    <property type="entry name" value="P-loop containing nucleoside triphosphate hydrolases"/>
    <property type="match status" value="2"/>
</dbReference>
<dbReference type="SUPFAM" id="SSF56712">
    <property type="entry name" value="Prokaryotic type I DNA topoisomerase"/>
    <property type="match status" value="1"/>
</dbReference>
<dbReference type="PROSITE" id="PS51192">
    <property type="entry name" value="HELICASE_ATP_BIND_1"/>
    <property type="match status" value="1"/>
</dbReference>
<dbReference type="PROSITE" id="PS52039">
    <property type="entry name" value="TOPO_IA_2"/>
    <property type="match status" value="1"/>
</dbReference>
<dbReference type="PROSITE" id="PS50880">
    <property type="entry name" value="TOPRIM"/>
    <property type="match status" value="1"/>
</dbReference>
<dbReference type="PROSITE" id="PS52037">
    <property type="entry name" value="ZF_RG_C"/>
    <property type="match status" value="1"/>
</dbReference>
<dbReference type="PROSITE" id="PS52036">
    <property type="entry name" value="ZF_RG_N"/>
    <property type="match status" value="1"/>
</dbReference>